<sequence length="248" mass="26505">MDITLVGKKVIVTGGSRGIGLGIVKLFLENGADVEIWGLNEERGQAVIESLTGLGGEVSFARVDVSHNGGVKDCVQKFLDKHNKIDILVNNAGITRDNLLMRMSEDDWQSVISTNLTSLYYTCSSVIRHMIKARSGSIINVASIVAKIGSAGQTNYAAAKAGIIAFTKSLAKEVAARNIRVNCLAPGFIETDMTSVLNDNLKAEWLKSIPLGRAGTPEDVARVALFLASQLSSYMTAQTLVVDGGLTY</sequence>
<reference key="1">
    <citation type="journal article" date="1999" name="Nat. Genet.">
        <title>Comparative genomes of Chlamydia pneumoniae and C. trachomatis.</title>
        <authorList>
            <person name="Kalman S."/>
            <person name="Mitchell W.P."/>
            <person name="Marathe R."/>
            <person name="Lammel C.J."/>
            <person name="Fan J."/>
            <person name="Hyman R.W."/>
            <person name="Olinger L."/>
            <person name="Grimwood J."/>
            <person name="Davis R.W."/>
            <person name="Stephens R.S."/>
        </authorList>
    </citation>
    <scope>NUCLEOTIDE SEQUENCE [LARGE SCALE GENOMIC DNA]</scope>
    <source>
        <strain>CWL029</strain>
    </source>
</reference>
<reference key="2">
    <citation type="journal article" date="2000" name="Nucleic Acids Res.">
        <title>Genome sequences of Chlamydia trachomatis MoPn and Chlamydia pneumoniae AR39.</title>
        <authorList>
            <person name="Read T.D."/>
            <person name="Brunham R.C."/>
            <person name="Shen C."/>
            <person name="Gill S.R."/>
            <person name="Heidelberg J.F."/>
            <person name="White O."/>
            <person name="Hickey E.K."/>
            <person name="Peterson J.D."/>
            <person name="Utterback T.R."/>
            <person name="Berry K.J."/>
            <person name="Bass S."/>
            <person name="Linher K.D."/>
            <person name="Weidman J.F."/>
            <person name="Khouri H.M."/>
            <person name="Craven B."/>
            <person name="Bowman C."/>
            <person name="Dodson R.J."/>
            <person name="Gwinn M.L."/>
            <person name="Nelson W.C."/>
            <person name="DeBoy R.T."/>
            <person name="Kolonay J.F."/>
            <person name="McClarty G."/>
            <person name="Salzberg S.L."/>
            <person name="Eisen J.A."/>
            <person name="Fraser C.M."/>
        </authorList>
    </citation>
    <scope>NUCLEOTIDE SEQUENCE [LARGE SCALE GENOMIC DNA]</scope>
    <source>
        <strain>AR39</strain>
    </source>
</reference>
<reference key="3">
    <citation type="journal article" date="2000" name="Nucleic Acids Res.">
        <title>Comparison of whole genome sequences of Chlamydia pneumoniae J138 from Japan and CWL029 from USA.</title>
        <authorList>
            <person name="Shirai M."/>
            <person name="Hirakawa H."/>
            <person name="Kimoto M."/>
            <person name="Tabuchi M."/>
            <person name="Kishi F."/>
            <person name="Ouchi K."/>
            <person name="Shiba T."/>
            <person name="Ishii K."/>
            <person name="Hattori M."/>
            <person name="Kuhara S."/>
            <person name="Nakazawa T."/>
        </authorList>
    </citation>
    <scope>NUCLEOTIDE SEQUENCE [LARGE SCALE GENOMIC DNA]</scope>
    <source>
        <strain>J138</strain>
    </source>
</reference>
<reference key="4">
    <citation type="submission" date="2002-05" db="EMBL/GenBank/DDBJ databases">
        <title>The genome sequence of Chlamydia pneumoniae TW183 and comparison with other Chlamydia strains based on whole genome sequence analysis.</title>
        <authorList>
            <person name="Geng M.M."/>
            <person name="Schuhmacher A."/>
            <person name="Muehldorfer I."/>
            <person name="Bensch K.W."/>
            <person name="Schaefer K.P."/>
            <person name="Schneider S."/>
            <person name="Pohl T."/>
            <person name="Essig A."/>
            <person name="Marre R."/>
            <person name="Melchers K."/>
        </authorList>
    </citation>
    <scope>NUCLEOTIDE SEQUENCE [LARGE SCALE GENOMIC DNA]</scope>
    <source>
        <strain>TW-183</strain>
    </source>
</reference>
<feature type="chain" id="PRO_0000054670" description="3-oxoacyl-[acyl-carrier-protein] reductase FabG">
    <location>
        <begin position="1"/>
        <end position="248"/>
    </location>
</feature>
<feature type="active site" description="Proton acceptor" evidence="2">
    <location>
        <position position="156"/>
    </location>
</feature>
<feature type="binding site" evidence="1">
    <location>
        <begin position="14"/>
        <end position="17"/>
    </location>
    <ligand>
        <name>NADP(+)</name>
        <dbReference type="ChEBI" id="CHEBI:58349"/>
    </ligand>
</feature>
<feature type="binding site" evidence="1">
    <location>
        <begin position="64"/>
        <end position="65"/>
    </location>
    <ligand>
        <name>NADP(+)</name>
        <dbReference type="ChEBI" id="CHEBI:58349"/>
    </ligand>
</feature>
<feature type="binding site" evidence="1">
    <location>
        <position position="91"/>
    </location>
    <ligand>
        <name>NADP(+)</name>
        <dbReference type="ChEBI" id="CHEBI:58349"/>
    </ligand>
</feature>
<feature type="binding site" evidence="1">
    <location>
        <position position="143"/>
    </location>
    <ligand>
        <name>substrate</name>
    </ligand>
</feature>
<feature type="binding site" evidence="1">
    <location>
        <begin position="156"/>
        <end position="160"/>
    </location>
    <ligand>
        <name>NADP(+)</name>
        <dbReference type="ChEBI" id="CHEBI:58349"/>
    </ligand>
</feature>
<feature type="binding site" evidence="1">
    <location>
        <position position="189"/>
    </location>
    <ligand>
        <name>NADP(+)</name>
        <dbReference type="ChEBI" id="CHEBI:58349"/>
    </ligand>
</feature>
<accession>Q9Z8P2</accession>
<accession>Q9JQD1</accession>
<proteinExistence type="inferred from homology"/>
<dbReference type="EC" id="1.1.1.100"/>
<dbReference type="EMBL" id="AE001363">
    <property type="protein sequence ID" value="AAD18445.1"/>
    <property type="molecule type" value="Genomic_DNA"/>
</dbReference>
<dbReference type="EMBL" id="AE002161">
    <property type="protein sequence ID" value="AAF38299.1"/>
    <property type="molecule type" value="Genomic_DNA"/>
</dbReference>
<dbReference type="EMBL" id="BA000008">
    <property type="protein sequence ID" value="BAA98506.1"/>
    <property type="molecule type" value="Genomic_DNA"/>
</dbReference>
<dbReference type="EMBL" id="AE009440">
    <property type="protein sequence ID" value="AAP98238.1"/>
    <property type="molecule type" value="Genomic_DNA"/>
</dbReference>
<dbReference type="PIR" id="D72096">
    <property type="entry name" value="D72096"/>
</dbReference>
<dbReference type="PIR" id="H86527">
    <property type="entry name" value="H86527"/>
</dbReference>
<dbReference type="RefSeq" id="NP_224501.1">
    <property type="nucleotide sequence ID" value="NC_000922.1"/>
</dbReference>
<dbReference type="RefSeq" id="WP_010882944.1">
    <property type="nucleotide sequence ID" value="NZ_LN847257.1"/>
</dbReference>
<dbReference type="SMR" id="Q9Z8P2"/>
<dbReference type="STRING" id="406984.CPK_ORF00804"/>
<dbReference type="GeneID" id="45050345"/>
<dbReference type="KEGG" id="cpa:CP_0462"/>
<dbReference type="KEGG" id="cpj:fabG"/>
<dbReference type="KEGG" id="cpn:CPn_0296"/>
<dbReference type="KEGG" id="cpt:CpB0305"/>
<dbReference type="PATRIC" id="fig|115713.3.peg.330"/>
<dbReference type="eggNOG" id="COG1028">
    <property type="taxonomic scope" value="Bacteria"/>
</dbReference>
<dbReference type="HOGENOM" id="CLU_010194_1_3_0"/>
<dbReference type="OrthoDB" id="9803333at2"/>
<dbReference type="UniPathway" id="UPA00094"/>
<dbReference type="Proteomes" id="UP000000583">
    <property type="component" value="Chromosome"/>
</dbReference>
<dbReference type="Proteomes" id="UP000000801">
    <property type="component" value="Chromosome"/>
</dbReference>
<dbReference type="GO" id="GO:0004316">
    <property type="term" value="F:3-oxoacyl-[acyl-carrier-protein] reductase (NADPH) activity"/>
    <property type="evidence" value="ECO:0007669"/>
    <property type="project" value="UniProtKB-EC"/>
</dbReference>
<dbReference type="GO" id="GO:0051287">
    <property type="term" value="F:NAD binding"/>
    <property type="evidence" value="ECO:0007669"/>
    <property type="project" value="InterPro"/>
</dbReference>
<dbReference type="GO" id="GO:0048038">
    <property type="term" value="F:quinone binding"/>
    <property type="evidence" value="ECO:0007669"/>
    <property type="project" value="TreeGrafter"/>
</dbReference>
<dbReference type="GO" id="GO:0006633">
    <property type="term" value="P:fatty acid biosynthetic process"/>
    <property type="evidence" value="ECO:0007669"/>
    <property type="project" value="UniProtKB-UniPathway"/>
</dbReference>
<dbReference type="CDD" id="cd05333">
    <property type="entry name" value="BKR_SDR_c"/>
    <property type="match status" value="1"/>
</dbReference>
<dbReference type="FunFam" id="3.40.50.720:FF:000115">
    <property type="entry name" value="3-oxoacyl-[acyl-carrier-protein] reductase FabG"/>
    <property type="match status" value="1"/>
</dbReference>
<dbReference type="Gene3D" id="3.40.50.720">
    <property type="entry name" value="NAD(P)-binding Rossmann-like Domain"/>
    <property type="match status" value="1"/>
</dbReference>
<dbReference type="InterPro" id="IPR011284">
    <property type="entry name" value="3oxo_ACP_reduc"/>
</dbReference>
<dbReference type="InterPro" id="IPR036291">
    <property type="entry name" value="NAD(P)-bd_dom_sf"/>
</dbReference>
<dbReference type="InterPro" id="IPR020904">
    <property type="entry name" value="Sc_DH/Rdtase_CS"/>
</dbReference>
<dbReference type="InterPro" id="IPR002347">
    <property type="entry name" value="SDR_fam"/>
</dbReference>
<dbReference type="NCBIfam" id="TIGR01830">
    <property type="entry name" value="3oxo_ACP_reduc"/>
    <property type="match status" value="1"/>
</dbReference>
<dbReference type="NCBIfam" id="NF004197">
    <property type="entry name" value="PRK05653.1-1"/>
    <property type="match status" value="1"/>
</dbReference>
<dbReference type="NCBIfam" id="NF005559">
    <property type="entry name" value="PRK07231.1"/>
    <property type="match status" value="1"/>
</dbReference>
<dbReference type="NCBIfam" id="NF009466">
    <property type="entry name" value="PRK12826.1-2"/>
    <property type="match status" value="1"/>
</dbReference>
<dbReference type="PANTHER" id="PTHR42760:SF133">
    <property type="entry name" value="3-OXOACYL-[ACYL-CARRIER-PROTEIN] REDUCTASE"/>
    <property type="match status" value="1"/>
</dbReference>
<dbReference type="PANTHER" id="PTHR42760">
    <property type="entry name" value="SHORT-CHAIN DEHYDROGENASES/REDUCTASES FAMILY MEMBER"/>
    <property type="match status" value="1"/>
</dbReference>
<dbReference type="Pfam" id="PF13561">
    <property type="entry name" value="adh_short_C2"/>
    <property type="match status" value="1"/>
</dbReference>
<dbReference type="PRINTS" id="PR00081">
    <property type="entry name" value="GDHRDH"/>
</dbReference>
<dbReference type="PRINTS" id="PR00080">
    <property type="entry name" value="SDRFAMILY"/>
</dbReference>
<dbReference type="SUPFAM" id="SSF51735">
    <property type="entry name" value="NAD(P)-binding Rossmann-fold domains"/>
    <property type="match status" value="1"/>
</dbReference>
<dbReference type="PROSITE" id="PS00061">
    <property type="entry name" value="ADH_SHORT"/>
    <property type="match status" value="1"/>
</dbReference>
<protein>
    <recommendedName>
        <fullName>3-oxoacyl-[acyl-carrier-protein] reductase FabG</fullName>
        <ecNumber>1.1.1.100</ecNumber>
    </recommendedName>
    <alternativeName>
        <fullName>3-ketoacyl-acyl carrier protein reductase</fullName>
    </alternativeName>
    <alternativeName>
        <fullName>Beta-Ketoacyl-acyl carrier protein reductase</fullName>
    </alternativeName>
    <alternativeName>
        <fullName>Beta-ketoacyl-ACP reductase</fullName>
    </alternativeName>
</protein>
<evidence type="ECO:0000250" key="1"/>
<evidence type="ECO:0000255" key="2">
    <source>
        <dbReference type="PROSITE-ProRule" id="PRU10001"/>
    </source>
</evidence>
<evidence type="ECO:0000305" key="3"/>
<gene>
    <name type="primary">fabG</name>
    <name type="ordered locus">CPn_0296</name>
    <name type="ordered locus">CP_0462</name>
    <name type="ordered locus">CpB0305</name>
</gene>
<organism>
    <name type="scientific">Chlamydia pneumoniae</name>
    <name type="common">Chlamydophila pneumoniae</name>
    <dbReference type="NCBI Taxonomy" id="83558"/>
    <lineage>
        <taxon>Bacteria</taxon>
        <taxon>Pseudomonadati</taxon>
        <taxon>Chlamydiota</taxon>
        <taxon>Chlamydiia</taxon>
        <taxon>Chlamydiales</taxon>
        <taxon>Chlamydiaceae</taxon>
        <taxon>Chlamydia/Chlamydophila group</taxon>
        <taxon>Chlamydia</taxon>
    </lineage>
</organism>
<keyword id="KW-0275">Fatty acid biosynthesis</keyword>
<keyword id="KW-0276">Fatty acid metabolism</keyword>
<keyword id="KW-0444">Lipid biosynthesis</keyword>
<keyword id="KW-0443">Lipid metabolism</keyword>
<keyword id="KW-0521">NADP</keyword>
<keyword id="KW-0560">Oxidoreductase</keyword>
<comment type="function">
    <text evidence="1">Catalyzes the NADPH-dependent reduction of beta-ketoacyl-ACP substrates to beta-hydroxyacyl-ACP products, the first reductive step in the elongation cycle of fatty acid biosynthesis.</text>
</comment>
<comment type="catalytic activity">
    <reaction>
        <text>a (3R)-hydroxyacyl-[ACP] + NADP(+) = a 3-oxoacyl-[ACP] + NADPH + H(+)</text>
        <dbReference type="Rhea" id="RHEA:17397"/>
        <dbReference type="Rhea" id="RHEA-COMP:9916"/>
        <dbReference type="Rhea" id="RHEA-COMP:9945"/>
        <dbReference type="ChEBI" id="CHEBI:15378"/>
        <dbReference type="ChEBI" id="CHEBI:57783"/>
        <dbReference type="ChEBI" id="CHEBI:58349"/>
        <dbReference type="ChEBI" id="CHEBI:78776"/>
        <dbReference type="ChEBI" id="CHEBI:78827"/>
        <dbReference type="EC" id="1.1.1.100"/>
    </reaction>
</comment>
<comment type="pathway">
    <text>Lipid metabolism; fatty acid biosynthesis.</text>
</comment>
<comment type="subunit">
    <text evidence="1">Homotetramer.</text>
</comment>
<comment type="similarity">
    <text evidence="3">Belongs to the short-chain dehydrogenases/reductases (SDR) family.</text>
</comment>
<name>FABG_CHLPN</name>